<protein>
    <recommendedName>
        <fullName evidence="2">Large ribosomal subunit protein uL30</fullName>
    </recommendedName>
    <alternativeName>
        <fullName>50S ribosomal protein L30</fullName>
    </alternativeName>
</protein>
<name>RL30_AQUAE</name>
<sequence>MSKLKVKLLRGLAGESERHIQAVKSLGLKKRGQERILEDNPLVWGNIRKAFHLVGVAYRIDFSGDIPTVERDLSEKPDYTVINKNGVYTNGKGVYYFSRITDLEDFLRKKGYKKYKNWKGEEVEL</sequence>
<dbReference type="EMBL" id="AE000657">
    <property type="protein sequence ID" value="AAC07535.1"/>
    <property type="molecule type" value="Genomic_DNA"/>
</dbReference>
<dbReference type="PIR" id="A70442">
    <property type="entry name" value="A70442"/>
</dbReference>
<dbReference type="RefSeq" id="NP_214128.1">
    <property type="nucleotide sequence ID" value="NC_000918.1"/>
</dbReference>
<dbReference type="SMR" id="O67562"/>
<dbReference type="STRING" id="224324.aq_1644"/>
<dbReference type="EnsemblBacteria" id="AAC07535">
    <property type="protein sequence ID" value="AAC07535"/>
    <property type="gene ID" value="aq_1644"/>
</dbReference>
<dbReference type="KEGG" id="aae:aq_1644"/>
<dbReference type="eggNOG" id="COG1841">
    <property type="taxonomic scope" value="Bacteria"/>
</dbReference>
<dbReference type="HOGENOM" id="CLU_1988003_0_0_0"/>
<dbReference type="InParanoid" id="O67562"/>
<dbReference type="OrthoDB" id="9812790at2"/>
<dbReference type="Proteomes" id="UP000000798">
    <property type="component" value="Chromosome"/>
</dbReference>
<dbReference type="GO" id="GO:0022625">
    <property type="term" value="C:cytosolic large ribosomal subunit"/>
    <property type="evidence" value="ECO:0000318"/>
    <property type="project" value="GO_Central"/>
</dbReference>
<dbReference type="GO" id="GO:0003735">
    <property type="term" value="F:structural constituent of ribosome"/>
    <property type="evidence" value="ECO:0007669"/>
    <property type="project" value="InterPro"/>
</dbReference>
<dbReference type="GO" id="GO:0006412">
    <property type="term" value="P:translation"/>
    <property type="evidence" value="ECO:0007669"/>
    <property type="project" value="InterPro"/>
</dbReference>
<dbReference type="CDD" id="cd01658">
    <property type="entry name" value="Ribosomal_L30"/>
    <property type="match status" value="1"/>
</dbReference>
<dbReference type="Gene3D" id="3.30.1390.20">
    <property type="entry name" value="Ribosomal protein L30, ferredoxin-like fold domain"/>
    <property type="match status" value="1"/>
</dbReference>
<dbReference type="InterPro" id="IPR036919">
    <property type="entry name" value="Ribo_uL30_ferredoxin-like_sf"/>
</dbReference>
<dbReference type="InterPro" id="IPR005996">
    <property type="entry name" value="Ribosomal_uL30_bac-type"/>
</dbReference>
<dbReference type="InterPro" id="IPR018038">
    <property type="entry name" value="Ribosomal_uL30_CS"/>
</dbReference>
<dbReference type="InterPro" id="IPR016082">
    <property type="entry name" value="Ribosomal_uL30_ferredoxin-like"/>
</dbReference>
<dbReference type="NCBIfam" id="TIGR01308">
    <property type="entry name" value="rpmD_bact"/>
    <property type="match status" value="1"/>
</dbReference>
<dbReference type="Pfam" id="PF00327">
    <property type="entry name" value="Ribosomal_L30"/>
    <property type="match status" value="1"/>
</dbReference>
<dbReference type="SUPFAM" id="SSF55129">
    <property type="entry name" value="Ribosomal protein L30p/L7e"/>
    <property type="match status" value="1"/>
</dbReference>
<dbReference type="PROSITE" id="PS00634">
    <property type="entry name" value="RIBOSOMAL_L30"/>
    <property type="match status" value="1"/>
</dbReference>
<reference key="1">
    <citation type="journal article" date="1998" name="Nature">
        <title>The complete genome of the hyperthermophilic bacterium Aquifex aeolicus.</title>
        <authorList>
            <person name="Deckert G."/>
            <person name="Warren P.V."/>
            <person name="Gaasterland T."/>
            <person name="Young W.G."/>
            <person name="Lenox A.L."/>
            <person name="Graham D.E."/>
            <person name="Overbeek R."/>
            <person name="Snead M.A."/>
            <person name="Keller M."/>
            <person name="Aujay M."/>
            <person name="Huber R."/>
            <person name="Feldman R.A."/>
            <person name="Short J.M."/>
            <person name="Olsen G.J."/>
            <person name="Swanson R.V."/>
        </authorList>
    </citation>
    <scope>NUCLEOTIDE SEQUENCE [LARGE SCALE GENOMIC DNA]</scope>
    <source>
        <strain>VF5</strain>
    </source>
</reference>
<evidence type="ECO:0000303" key="1">
    <source>
    </source>
</evidence>
<evidence type="ECO:0000305" key="2"/>
<feature type="chain" id="PRO_0000104580" description="Large ribosomal subunit protein uL30">
    <location>
        <begin position="1"/>
        <end position="125"/>
    </location>
</feature>
<feature type="region of interest" description="Large ribosomal subunit protein uL30">
    <location>
        <begin position="1"/>
        <end position="61"/>
    </location>
</feature>
<feature type="region of interest" description="Unknown">
    <location>
        <begin position="62"/>
        <end position="125"/>
    </location>
</feature>
<keyword id="KW-1185">Reference proteome</keyword>
<keyword id="KW-0687">Ribonucleoprotein</keyword>
<keyword id="KW-0689">Ribosomal protein</keyword>
<comment type="subunit">
    <text evidence="2">Part of the 50S ribosomal subunit.</text>
</comment>
<comment type="similarity">
    <text evidence="2">Belongs to the universal ribosomal protein uL30 family.</text>
</comment>
<gene>
    <name evidence="1" type="primary">rpmD</name>
    <name type="ordered locus">aq_1644</name>
</gene>
<proteinExistence type="inferred from homology"/>
<organism>
    <name type="scientific">Aquifex aeolicus (strain VF5)</name>
    <dbReference type="NCBI Taxonomy" id="224324"/>
    <lineage>
        <taxon>Bacteria</taxon>
        <taxon>Pseudomonadati</taxon>
        <taxon>Aquificota</taxon>
        <taxon>Aquificia</taxon>
        <taxon>Aquificales</taxon>
        <taxon>Aquificaceae</taxon>
        <taxon>Aquifex</taxon>
    </lineage>
</organism>
<accession>O67562</accession>